<organism>
    <name type="scientific">Staphylococcus aureus (strain MW2)</name>
    <dbReference type="NCBI Taxonomy" id="196620"/>
    <lineage>
        <taxon>Bacteria</taxon>
        <taxon>Bacillati</taxon>
        <taxon>Bacillota</taxon>
        <taxon>Bacilli</taxon>
        <taxon>Bacillales</taxon>
        <taxon>Staphylococcaceae</taxon>
        <taxon>Staphylococcus</taxon>
    </lineage>
</organism>
<protein>
    <recommendedName>
        <fullName>UPF0382 membrane protein MW0538</fullName>
    </recommendedName>
</protein>
<comment type="subcellular location">
    <subcellularLocation>
        <location evidence="2">Cell membrane</location>
        <topology evidence="2">Multi-pass membrane protein</topology>
    </subcellularLocation>
</comment>
<comment type="similarity">
    <text evidence="2">Belongs to the UPF0382 family.</text>
</comment>
<evidence type="ECO:0000255" key="1"/>
<evidence type="ECO:0000305" key="2"/>
<proteinExistence type="inferred from homology"/>
<keyword id="KW-1003">Cell membrane</keyword>
<keyword id="KW-0472">Membrane</keyword>
<keyword id="KW-0812">Transmembrane</keyword>
<keyword id="KW-1133">Transmembrane helix</keyword>
<accession>Q7A1P4</accession>
<sequence>MKLFIILGALNAMMAVGTGAFGAHGLQGKISDHYLSVWEKATTYQMYHGLALLIIGVISGTTSINVNWAGWLIFAGIIFFSGSLYILVLTQIKVLGAITPIGGVLFIIGWIMLIIATFKFAG</sequence>
<feature type="chain" id="PRO_0000249034" description="UPF0382 membrane protein MW0538">
    <location>
        <begin position="1"/>
        <end position="122"/>
    </location>
</feature>
<feature type="transmembrane region" description="Helical" evidence="1">
    <location>
        <begin position="3"/>
        <end position="23"/>
    </location>
</feature>
<feature type="transmembrane region" description="Helical" evidence="1">
    <location>
        <begin position="46"/>
        <end position="66"/>
    </location>
</feature>
<feature type="transmembrane region" description="Helical" evidence="1">
    <location>
        <begin position="69"/>
        <end position="89"/>
    </location>
</feature>
<feature type="transmembrane region" description="Helical" evidence="1">
    <location>
        <begin position="98"/>
        <end position="118"/>
    </location>
</feature>
<reference key="1">
    <citation type="journal article" date="2002" name="Lancet">
        <title>Genome and virulence determinants of high virulence community-acquired MRSA.</title>
        <authorList>
            <person name="Baba T."/>
            <person name="Takeuchi F."/>
            <person name="Kuroda M."/>
            <person name="Yuzawa H."/>
            <person name="Aoki K."/>
            <person name="Oguchi A."/>
            <person name="Nagai Y."/>
            <person name="Iwama N."/>
            <person name="Asano K."/>
            <person name="Naimi T."/>
            <person name="Kuroda H."/>
            <person name="Cui L."/>
            <person name="Yamamoto K."/>
            <person name="Hiramatsu K."/>
        </authorList>
    </citation>
    <scope>NUCLEOTIDE SEQUENCE [LARGE SCALE GENOMIC DNA]</scope>
    <source>
        <strain>MW2</strain>
    </source>
</reference>
<dbReference type="EMBL" id="BA000033">
    <property type="protein sequence ID" value="BAB94403.1"/>
    <property type="molecule type" value="Genomic_DNA"/>
</dbReference>
<dbReference type="RefSeq" id="WP_000765183.1">
    <property type="nucleotide sequence ID" value="NC_003923.1"/>
</dbReference>
<dbReference type="KEGG" id="sam:MW0538"/>
<dbReference type="HOGENOM" id="CLU_096548_3_3_9"/>
<dbReference type="GO" id="GO:0005886">
    <property type="term" value="C:plasma membrane"/>
    <property type="evidence" value="ECO:0007669"/>
    <property type="project" value="UniProtKB-SubCell"/>
</dbReference>
<dbReference type="InterPro" id="IPR006696">
    <property type="entry name" value="DUF423"/>
</dbReference>
<dbReference type="PANTHER" id="PTHR43461">
    <property type="entry name" value="TRANSMEMBRANE PROTEIN 256"/>
    <property type="match status" value="1"/>
</dbReference>
<dbReference type="PANTHER" id="PTHR43461:SF1">
    <property type="entry name" value="TRANSMEMBRANE PROTEIN 256"/>
    <property type="match status" value="1"/>
</dbReference>
<dbReference type="Pfam" id="PF04241">
    <property type="entry name" value="DUF423"/>
    <property type="match status" value="1"/>
</dbReference>
<name>Y538_STAAW</name>
<gene>
    <name type="ordered locus">MW0538</name>
</gene>